<name>AAEA_SALTY</name>
<gene>
    <name evidence="1" type="primary">aaeA</name>
    <name type="ordered locus">STM3365</name>
</gene>
<reference key="1">
    <citation type="journal article" date="2001" name="Nature">
        <title>Complete genome sequence of Salmonella enterica serovar Typhimurium LT2.</title>
        <authorList>
            <person name="McClelland M."/>
            <person name="Sanderson K.E."/>
            <person name="Spieth J."/>
            <person name="Clifton S.W."/>
            <person name="Latreille P."/>
            <person name="Courtney L."/>
            <person name="Porwollik S."/>
            <person name="Ali J."/>
            <person name="Dante M."/>
            <person name="Du F."/>
            <person name="Hou S."/>
            <person name="Layman D."/>
            <person name="Leonard S."/>
            <person name="Nguyen C."/>
            <person name="Scott K."/>
            <person name="Holmes A."/>
            <person name="Grewal N."/>
            <person name="Mulvaney E."/>
            <person name="Ryan E."/>
            <person name="Sun H."/>
            <person name="Florea L."/>
            <person name="Miller W."/>
            <person name="Stoneking T."/>
            <person name="Nhan M."/>
            <person name="Waterston R."/>
            <person name="Wilson R.K."/>
        </authorList>
    </citation>
    <scope>NUCLEOTIDE SEQUENCE [LARGE SCALE GENOMIC DNA]</scope>
    <source>
        <strain>LT2 / SGSC1412 / ATCC 700720</strain>
    </source>
</reference>
<feature type="chain" id="PRO_0000201856" description="p-hydroxybenzoic acid efflux pump subunit AaeA">
    <location>
        <begin position="1"/>
        <end position="310"/>
    </location>
</feature>
<feature type="transmembrane region" description="Helical" evidence="1">
    <location>
        <begin position="12"/>
        <end position="32"/>
    </location>
</feature>
<organism>
    <name type="scientific">Salmonella typhimurium (strain LT2 / SGSC1412 / ATCC 700720)</name>
    <dbReference type="NCBI Taxonomy" id="99287"/>
    <lineage>
        <taxon>Bacteria</taxon>
        <taxon>Pseudomonadati</taxon>
        <taxon>Pseudomonadota</taxon>
        <taxon>Gammaproteobacteria</taxon>
        <taxon>Enterobacterales</taxon>
        <taxon>Enterobacteriaceae</taxon>
        <taxon>Salmonella</taxon>
    </lineage>
</organism>
<comment type="function">
    <text evidence="1">Forms an efflux pump with AaeB.</text>
</comment>
<comment type="subcellular location">
    <subcellularLocation>
        <location evidence="1">Cell inner membrane</location>
        <topology evidence="1">Single-pass membrane protein</topology>
    </subcellularLocation>
</comment>
<comment type="similarity">
    <text evidence="1">Belongs to the membrane fusion protein (MFP) (TC 8.A.1) family.</text>
</comment>
<evidence type="ECO:0000255" key="1">
    <source>
        <dbReference type="HAMAP-Rule" id="MF_01544"/>
    </source>
</evidence>
<accession>Q7CPM8</accession>
<proteinExistence type="inferred from homology"/>
<sequence length="310" mass="34545">MKTLTRKLSRTAITLVLVILAFIAIFRAWVYYTESPWTRDARFSADVVAIAPDVAGLITHVNVHDNQLVKKDQVLFTIDQPRYQKALAEAEADVAYYQVLAQEKRQEAGRRNRLGVQAMSREEIDQANNVLQTVLHQLAKAQATRDLAKLDLERTVIRAPADGWVTNLNVYAGEFITRGSTAVALVKKNSFYVQAYMEETKLEGVRPGYRAEITPLGSNRVLKGTVDSVAAGVTNASSTSDAKGMATIDSNLEWVRLAQRVPVRIRLDEQQGNLWPAGTTATVVITGKQDRDASQDSFFRKLAHRLREFG</sequence>
<dbReference type="EMBL" id="AE006468">
    <property type="protein sequence ID" value="AAL22234.1"/>
    <property type="molecule type" value="Genomic_DNA"/>
</dbReference>
<dbReference type="RefSeq" id="WP_000855134.1">
    <property type="nucleotide sequence ID" value="NC_003197.2"/>
</dbReference>
<dbReference type="SMR" id="Q7CPM8"/>
<dbReference type="STRING" id="99287.STM3365"/>
<dbReference type="PaxDb" id="99287-STM3365"/>
<dbReference type="KEGG" id="stm:STM3365"/>
<dbReference type="PATRIC" id="fig|99287.12.peg.3566"/>
<dbReference type="HOGENOM" id="CLU_018816_15_2_6"/>
<dbReference type="OMA" id="MFSPWTR"/>
<dbReference type="PhylomeDB" id="Q7CPM8"/>
<dbReference type="BioCyc" id="SENT99287:STM3365-MONOMER"/>
<dbReference type="Proteomes" id="UP000001014">
    <property type="component" value="Chromosome"/>
</dbReference>
<dbReference type="GO" id="GO:0005886">
    <property type="term" value="C:plasma membrane"/>
    <property type="evidence" value="ECO:0007669"/>
    <property type="project" value="UniProtKB-SubCell"/>
</dbReference>
<dbReference type="GO" id="GO:0022857">
    <property type="term" value="F:transmembrane transporter activity"/>
    <property type="evidence" value="ECO:0000318"/>
    <property type="project" value="GO_Central"/>
</dbReference>
<dbReference type="GO" id="GO:0055085">
    <property type="term" value="P:transmembrane transport"/>
    <property type="evidence" value="ECO:0000318"/>
    <property type="project" value="GO_Central"/>
</dbReference>
<dbReference type="FunFam" id="2.40.30.170:FF:000002">
    <property type="entry name" value="p-hydroxybenzoic acid efflux pump subunit AaeA"/>
    <property type="match status" value="1"/>
</dbReference>
<dbReference type="FunFam" id="2.40.50.100:FF:000018">
    <property type="entry name" value="p-hydroxybenzoic acid efflux pump subunit AaeA"/>
    <property type="match status" value="1"/>
</dbReference>
<dbReference type="Gene3D" id="2.40.30.170">
    <property type="match status" value="1"/>
</dbReference>
<dbReference type="Gene3D" id="2.40.50.100">
    <property type="match status" value="1"/>
</dbReference>
<dbReference type="HAMAP" id="MF_01544">
    <property type="entry name" value="AaeA"/>
    <property type="match status" value="1"/>
</dbReference>
<dbReference type="InterPro" id="IPR043602">
    <property type="entry name" value="CusB-like_dom_1"/>
</dbReference>
<dbReference type="InterPro" id="IPR032317">
    <property type="entry name" value="CusB_D23"/>
</dbReference>
<dbReference type="InterPro" id="IPR050393">
    <property type="entry name" value="MFP_Efflux_Pump"/>
</dbReference>
<dbReference type="InterPro" id="IPR022871">
    <property type="entry name" value="PHBA_efflux_pump_AaeA"/>
</dbReference>
<dbReference type="InterPro" id="IPR006143">
    <property type="entry name" value="RND_pump_MFP"/>
</dbReference>
<dbReference type="NCBIfam" id="NF007850">
    <property type="entry name" value="PRK10559.1"/>
    <property type="match status" value="1"/>
</dbReference>
<dbReference type="NCBIfam" id="TIGR01730">
    <property type="entry name" value="RND_mfp"/>
    <property type="match status" value="1"/>
</dbReference>
<dbReference type="PANTHER" id="PTHR30367:SF12">
    <property type="entry name" value="P-HYDROXYBENZOIC ACID EFFLUX PUMP SUBUNIT AAEA"/>
    <property type="match status" value="1"/>
</dbReference>
<dbReference type="PANTHER" id="PTHR30367">
    <property type="entry name" value="P-HYDROXYBENZOIC ACID EFFLUX PUMP SUBUNIT AAEA-RELATED"/>
    <property type="match status" value="1"/>
</dbReference>
<dbReference type="Pfam" id="PF00529">
    <property type="entry name" value="CusB_dom_1"/>
    <property type="match status" value="1"/>
</dbReference>
<dbReference type="Pfam" id="PF16576">
    <property type="entry name" value="HlyD_D23"/>
    <property type="match status" value="1"/>
</dbReference>
<dbReference type="SUPFAM" id="SSF111369">
    <property type="entry name" value="HlyD-like secretion proteins"/>
    <property type="match status" value="1"/>
</dbReference>
<protein>
    <recommendedName>
        <fullName evidence="1">p-hydroxybenzoic acid efflux pump subunit AaeA</fullName>
        <shortName evidence="1">pHBA efflux pump protein A</shortName>
    </recommendedName>
</protein>
<keyword id="KW-0997">Cell inner membrane</keyword>
<keyword id="KW-1003">Cell membrane</keyword>
<keyword id="KW-0472">Membrane</keyword>
<keyword id="KW-1185">Reference proteome</keyword>
<keyword id="KW-0812">Transmembrane</keyword>
<keyword id="KW-1133">Transmembrane helix</keyword>
<keyword id="KW-0813">Transport</keyword>